<name>NUSG_HELPY</name>
<proteinExistence type="inferred from homology"/>
<reference key="1">
    <citation type="journal article" date="1997" name="Nature">
        <title>The complete genome sequence of the gastric pathogen Helicobacter pylori.</title>
        <authorList>
            <person name="Tomb J.-F."/>
            <person name="White O."/>
            <person name="Kerlavage A.R."/>
            <person name="Clayton R.A."/>
            <person name="Sutton G.G."/>
            <person name="Fleischmann R.D."/>
            <person name="Ketchum K.A."/>
            <person name="Klenk H.-P."/>
            <person name="Gill S.R."/>
            <person name="Dougherty B.A."/>
            <person name="Nelson K.E."/>
            <person name="Quackenbush J."/>
            <person name="Zhou L."/>
            <person name="Kirkness E.F."/>
            <person name="Peterson S.N."/>
            <person name="Loftus B.J."/>
            <person name="Richardson D.L."/>
            <person name="Dodson R.J."/>
            <person name="Khalak H.G."/>
            <person name="Glodek A."/>
            <person name="McKenney K."/>
            <person name="FitzGerald L.M."/>
            <person name="Lee N."/>
            <person name="Adams M.D."/>
            <person name="Hickey E.K."/>
            <person name="Berg D.E."/>
            <person name="Gocayne J.D."/>
            <person name="Utterback T.R."/>
            <person name="Peterson J.D."/>
            <person name="Kelley J.M."/>
            <person name="Cotton M.D."/>
            <person name="Weidman J.F."/>
            <person name="Fujii C."/>
            <person name="Bowman C."/>
            <person name="Watthey L."/>
            <person name="Wallin E."/>
            <person name="Hayes W.S."/>
            <person name="Borodovsky M."/>
            <person name="Karp P.D."/>
            <person name="Smith H.O."/>
            <person name="Fraser C.M."/>
            <person name="Venter J.C."/>
        </authorList>
    </citation>
    <scope>NUCLEOTIDE SEQUENCE [LARGE SCALE GENOMIC DNA]</scope>
    <source>
        <strain>ATCC 700392 / 26695</strain>
    </source>
</reference>
<comment type="function">
    <text evidence="1">Participates in transcription elongation, termination and antitermination.</text>
</comment>
<comment type="similarity">
    <text evidence="1">Belongs to the NusG family.</text>
</comment>
<protein>
    <recommendedName>
        <fullName evidence="1">Transcription termination/antitermination protein NusG</fullName>
    </recommendedName>
</protein>
<sequence>MMDWYAIQTYSGSEQSVKKAIENLANDHNIRDRIQEIIVPTEDIIEVSKKSKTKVTERSLYPGYVFIKVDLDTVLWHKIQSLPRVSRFIGENKKPTPLSEADIGHILEKMNNRAAPKPKIFFEQGEVVRVVEGPFANFTATVEEYDVEHRKLKLNVSIFGRNTPIEILHSQVEKII</sequence>
<accession>P55976</accession>
<dbReference type="EMBL" id="AE000511">
    <property type="protein sequence ID" value="AAD08249.1"/>
    <property type="molecule type" value="Genomic_DNA"/>
</dbReference>
<dbReference type="PIR" id="C64670">
    <property type="entry name" value="C64670"/>
</dbReference>
<dbReference type="RefSeq" id="NP_207994.1">
    <property type="nucleotide sequence ID" value="NC_000915.1"/>
</dbReference>
<dbReference type="SMR" id="P55976"/>
<dbReference type="FunCoup" id="P55976">
    <property type="interactions" value="353"/>
</dbReference>
<dbReference type="IntAct" id="P55976">
    <property type="interactions" value="7"/>
</dbReference>
<dbReference type="STRING" id="85962.HP_1203"/>
<dbReference type="PaxDb" id="85962-C694_06225"/>
<dbReference type="EnsemblBacteria" id="AAD08249">
    <property type="protein sequence ID" value="AAD08249"/>
    <property type="gene ID" value="HP_1203"/>
</dbReference>
<dbReference type="KEGG" id="hpy:HP_1203"/>
<dbReference type="PATRIC" id="fig|85962.8.peg.1260"/>
<dbReference type="eggNOG" id="COG0250">
    <property type="taxonomic scope" value="Bacteria"/>
</dbReference>
<dbReference type="InParanoid" id="P55976"/>
<dbReference type="OrthoDB" id="9809075at2"/>
<dbReference type="PhylomeDB" id="P55976"/>
<dbReference type="Proteomes" id="UP000000429">
    <property type="component" value="Chromosome"/>
</dbReference>
<dbReference type="GO" id="GO:0005829">
    <property type="term" value="C:cytosol"/>
    <property type="evidence" value="ECO:0000318"/>
    <property type="project" value="GO_Central"/>
</dbReference>
<dbReference type="GO" id="GO:0006353">
    <property type="term" value="P:DNA-templated transcription termination"/>
    <property type="evidence" value="ECO:0007669"/>
    <property type="project" value="UniProtKB-UniRule"/>
</dbReference>
<dbReference type="GO" id="GO:0032784">
    <property type="term" value="P:regulation of DNA-templated transcription elongation"/>
    <property type="evidence" value="ECO:0007669"/>
    <property type="project" value="InterPro"/>
</dbReference>
<dbReference type="GO" id="GO:0031564">
    <property type="term" value="P:transcription antitermination"/>
    <property type="evidence" value="ECO:0007669"/>
    <property type="project" value="UniProtKB-UniRule"/>
</dbReference>
<dbReference type="GO" id="GO:0140673">
    <property type="term" value="P:transcription elongation-coupled chromatin remodeling"/>
    <property type="evidence" value="ECO:0007669"/>
    <property type="project" value="InterPro"/>
</dbReference>
<dbReference type="CDD" id="cd06091">
    <property type="entry name" value="KOW_NusG"/>
    <property type="match status" value="1"/>
</dbReference>
<dbReference type="CDD" id="cd09891">
    <property type="entry name" value="NGN_Bact_1"/>
    <property type="match status" value="1"/>
</dbReference>
<dbReference type="FunFam" id="2.30.30.30:FF:000002">
    <property type="entry name" value="Transcription termination/antitermination factor NusG"/>
    <property type="match status" value="1"/>
</dbReference>
<dbReference type="FunFam" id="3.30.70.940:FF:000009">
    <property type="entry name" value="Transcription termination/antitermination protein NusG"/>
    <property type="match status" value="1"/>
</dbReference>
<dbReference type="Gene3D" id="2.30.30.30">
    <property type="match status" value="1"/>
</dbReference>
<dbReference type="Gene3D" id="3.30.70.940">
    <property type="entry name" value="NusG, N-terminal domain"/>
    <property type="match status" value="1"/>
</dbReference>
<dbReference type="HAMAP" id="MF_00948">
    <property type="entry name" value="NusG"/>
    <property type="match status" value="1"/>
</dbReference>
<dbReference type="InterPro" id="IPR005824">
    <property type="entry name" value="KOW"/>
</dbReference>
<dbReference type="InterPro" id="IPR047050">
    <property type="entry name" value="NGN"/>
</dbReference>
<dbReference type="InterPro" id="IPR006645">
    <property type="entry name" value="NGN-like_dom"/>
</dbReference>
<dbReference type="InterPro" id="IPR036735">
    <property type="entry name" value="NGN_dom_sf"/>
</dbReference>
<dbReference type="InterPro" id="IPR043425">
    <property type="entry name" value="NusG-like"/>
</dbReference>
<dbReference type="InterPro" id="IPR014722">
    <property type="entry name" value="Rib_uL2_dom2"/>
</dbReference>
<dbReference type="InterPro" id="IPR001062">
    <property type="entry name" value="Transcrpt_antiterm_NusG"/>
</dbReference>
<dbReference type="InterPro" id="IPR015869">
    <property type="entry name" value="Transcrpt_antiterm_NusG_bac_CS"/>
</dbReference>
<dbReference type="InterPro" id="IPR008991">
    <property type="entry name" value="Translation_prot_SH3-like_sf"/>
</dbReference>
<dbReference type="NCBIfam" id="TIGR00922">
    <property type="entry name" value="nusG"/>
    <property type="match status" value="1"/>
</dbReference>
<dbReference type="PANTHER" id="PTHR30265">
    <property type="entry name" value="RHO-INTERACTING TRANSCRIPTION TERMINATION FACTOR NUSG"/>
    <property type="match status" value="1"/>
</dbReference>
<dbReference type="PANTHER" id="PTHR30265:SF2">
    <property type="entry name" value="TRANSCRIPTION TERMINATION_ANTITERMINATION PROTEIN NUSG"/>
    <property type="match status" value="1"/>
</dbReference>
<dbReference type="Pfam" id="PF02357">
    <property type="entry name" value="NusG"/>
    <property type="match status" value="1"/>
</dbReference>
<dbReference type="PRINTS" id="PR00338">
    <property type="entry name" value="NUSGTNSCPFCT"/>
</dbReference>
<dbReference type="SMART" id="SM00739">
    <property type="entry name" value="KOW"/>
    <property type="match status" value="1"/>
</dbReference>
<dbReference type="SMART" id="SM00738">
    <property type="entry name" value="NGN"/>
    <property type="match status" value="1"/>
</dbReference>
<dbReference type="SUPFAM" id="SSF82679">
    <property type="entry name" value="N-utilization substance G protein NusG, N-terminal domain"/>
    <property type="match status" value="1"/>
</dbReference>
<dbReference type="SUPFAM" id="SSF50104">
    <property type="entry name" value="Translation proteins SH3-like domain"/>
    <property type="match status" value="1"/>
</dbReference>
<dbReference type="PROSITE" id="PS01014">
    <property type="entry name" value="NUSG"/>
    <property type="match status" value="1"/>
</dbReference>
<gene>
    <name evidence="1" type="primary">nusG</name>
    <name type="ordered locus">HP_1203</name>
</gene>
<organism>
    <name type="scientific">Helicobacter pylori (strain ATCC 700392 / 26695)</name>
    <name type="common">Campylobacter pylori</name>
    <dbReference type="NCBI Taxonomy" id="85962"/>
    <lineage>
        <taxon>Bacteria</taxon>
        <taxon>Pseudomonadati</taxon>
        <taxon>Campylobacterota</taxon>
        <taxon>Epsilonproteobacteria</taxon>
        <taxon>Campylobacterales</taxon>
        <taxon>Helicobacteraceae</taxon>
        <taxon>Helicobacter</taxon>
    </lineage>
</organism>
<feature type="chain" id="PRO_0000113930" description="Transcription termination/antitermination protein NusG">
    <location>
        <begin position="1"/>
        <end position="176"/>
    </location>
</feature>
<feature type="domain" description="KOW" evidence="1">
    <location>
        <begin position="125"/>
        <end position="149"/>
    </location>
</feature>
<evidence type="ECO:0000255" key="1">
    <source>
        <dbReference type="HAMAP-Rule" id="MF_00948"/>
    </source>
</evidence>
<keyword id="KW-1185">Reference proteome</keyword>
<keyword id="KW-0804">Transcription</keyword>
<keyword id="KW-0889">Transcription antitermination</keyword>
<keyword id="KW-0805">Transcription regulation</keyword>
<keyword id="KW-0806">Transcription termination</keyword>